<accession>A7ZF95</accession>
<gene>
    <name evidence="1" type="primary">hisG</name>
    <name type="ordered locus">Ccon26_16090</name>
    <name type="ORF">CCC13826_0216</name>
</gene>
<proteinExistence type="inferred from homology"/>
<evidence type="ECO:0000255" key="1">
    <source>
        <dbReference type="HAMAP-Rule" id="MF_01018"/>
    </source>
</evidence>
<name>HIS1_CAMC1</name>
<sequence>MITVALPKGRIAEDTLEIFRKIFGSSFMFEDRKLILEEGNFRFLMVRNQDIPTYVTEGAADIGVVGLDVLEEHKPNVVRLLDLQIGKCKVCIGIKNEEELDFSRSELKIATKMPNITRNYFAKLAVGVKIIKLYGSIELAPLVGLSDAIVDVVETGSTMKQNGLKVAGDIMQSSAYLIANKNSFIIKKDEILELYQKIKDEISK</sequence>
<reference key="1">
    <citation type="submission" date="2007-10" db="EMBL/GenBank/DDBJ databases">
        <title>Genome sequence of Campylobacter concisus 13826 isolated from human feces.</title>
        <authorList>
            <person name="Fouts D.E."/>
            <person name="Mongodin E.F."/>
            <person name="Puiu D."/>
            <person name="Sebastian Y."/>
            <person name="Miller W.G."/>
            <person name="Mandrell R.E."/>
            <person name="On S."/>
            <person name="Nelson K.E."/>
        </authorList>
    </citation>
    <scope>NUCLEOTIDE SEQUENCE [LARGE SCALE GENOMIC DNA]</scope>
    <source>
        <strain>13826</strain>
    </source>
</reference>
<keyword id="KW-0028">Amino-acid biosynthesis</keyword>
<keyword id="KW-0067">ATP-binding</keyword>
<keyword id="KW-0963">Cytoplasm</keyword>
<keyword id="KW-0328">Glycosyltransferase</keyword>
<keyword id="KW-0368">Histidine biosynthesis</keyword>
<keyword id="KW-0547">Nucleotide-binding</keyword>
<keyword id="KW-0808">Transferase</keyword>
<feature type="chain" id="PRO_1000072938" description="ATP phosphoribosyltransferase">
    <location>
        <begin position="1"/>
        <end position="204"/>
    </location>
</feature>
<organism>
    <name type="scientific">Campylobacter concisus (strain 13826)</name>
    <dbReference type="NCBI Taxonomy" id="360104"/>
    <lineage>
        <taxon>Bacteria</taxon>
        <taxon>Pseudomonadati</taxon>
        <taxon>Campylobacterota</taxon>
        <taxon>Epsilonproteobacteria</taxon>
        <taxon>Campylobacterales</taxon>
        <taxon>Campylobacteraceae</taxon>
        <taxon>Campylobacter</taxon>
    </lineage>
</organism>
<protein>
    <recommendedName>
        <fullName evidence="1">ATP phosphoribosyltransferase</fullName>
        <shortName evidence="1">ATP-PRT</shortName>
        <shortName evidence="1">ATP-PRTase</shortName>
        <ecNumber evidence="1">2.4.2.17</ecNumber>
    </recommendedName>
</protein>
<comment type="function">
    <text evidence="1">Catalyzes the condensation of ATP and 5-phosphoribose 1-diphosphate to form N'-(5'-phosphoribosyl)-ATP (PR-ATP). Has a crucial role in the pathway because the rate of histidine biosynthesis seems to be controlled primarily by regulation of HisG enzymatic activity.</text>
</comment>
<comment type="catalytic activity">
    <reaction evidence="1">
        <text>1-(5-phospho-beta-D-ribosyl)-ATP + diphosphate = 5-phospho-alpha-D-ribose 1-diphosphate + ATP</text>
        <dbReference type="Rhea" id="RHEA:18473"/>
        <dbReference type="ChEBI" id="CHEBI:30616"/>
        <dbReference type="ChEBI" id="CHEBI:33019"/>
        <dbReference type="ChEBI" id="CHEBI:58017"/>
        <dbReference type="ChEBI" id="CHEBI:73183"/>
        <dbReference type="EC" id="2.4.2.17"/>
    </reaction>
</comment>
<comment type="pathway">
    <text evidence="1">Amino-acid biosynthesis; L-histidine biosynthesis; L-histidine from 5-phospho-alpha-D-ribose 1-diphosphate: step 1/9.</text>
</comment>
<comment type="subunit">
    <text evidence="1">Heteromultimer composed of HisG and HisZ subunits.</text>
</comment>
<comment type="subcellular location">
    <subcellularLocation>
        <location evidence="1">Cytoplasm</location>
    </subcellularLocation>
</comment>
<comment type="domain">
    <text>Lacks the C-terminal regulatory region which is replaced by HisZ.</text>
</comment>
<comment type="similarity">
    <text evidence="1">Belongs to the ATP phosphoribosyltransferase family. Short subfamily.</text>
</comment>
<dbReference type="EC" id="2.4.2.17" evidence="1"/>
<dbReference type="EMBL" id="CP000792">
    <property type="protein sequence ID" value="EAT98394.1"/>
    <property type="molecule type" value="Genomic_DNA"/>
</dbReference>
<dbReference type="RefSeq" id="WP_012140323.1">
    <property type="nucleotide sequence ID" value="NC_009802.2"/>
</dbReference>
<dbReference type="SMR" id="A7ZF95"/>
<dbReference type="STRING" id="360104.CCC13826_0216"/>
<dbReference type="KEGG" id="cco:CCC13826_0216"/>
<dbReference type="eggNOG" id="COG0040">
    <property type="taxonomic scope" value="Bacteria"/>
</dbReference>
<dbReference type="HOGENOM" id="CLU_038115_2_0_7"/>
<dbReference type="OrthoDB" id="9801867at2"/>
<dbReference type="UniPathway" id="UPA00031">
    <property type="reaction ID" value="UER00006"/>
</dbReference>
<dbReference type="Proteomes" id="UP000001121">
    <property type="component" value="Chromosome"/>
</dbReference>
<dbReference type="GO" id="GO:0005737">
    <property type="term" value="C:cytoplasm"/>
    <property type="evidence" value="ECO:0007669"/>
    <property type="project" value="UniProtKB-SubCell"/>
</dbReference>
<dbReference type="GO" id="GO:0005524">
    <property type="term" value="F:ATP binding"/>
    <property type="evidence" value="ECO:0007669"/>
    <property type="project" value="UniProtKB-KW"/>
</dbReference>
<dbReference type="GO" id="GO:0003879">
    <property type="term" value="F:ATP phosphoribosyltransferase activity"/>
    <property type="evidence" value="ECO:0007669"/>
    <property type="project" value="UniProtKB-UniRule"/>
</dbReference>
<dbReference type="GO" id="GO:0000105">
    <property type="term" value="P:L-histidine biosynthetic process"/>
    <property type="evidence" value="ECO:0007669"/>
    <property type="project" value="UniProtKB-UniRule"/>
</dbReference>
<dbReference type="CDD" id="cd13595">
    <property type="entry name" value="PBP2_HisGs"/>
    <property type="match status" value="1"/>
</dbReference>
<dbReference type="FunFam" id="3.40.190.10:FF:000008">
    <property type="entry name" value="ATP phosphoribosyltransferase"/>
    <property type="match status" value="1"/>
</dbReference>
<dbReference type="Gene3D" id="3.40.190.10">
    <property type="entry name" value="Periplasmic binding protein-like II"/>
    <property type="match status" value="2"/>
</dbReference>
<dbReference type="HAMAP" id="MF_01018">
    <property type="entry name" value="HisG_Short"/>
    <property type="match status" value="1"/>
</dbReference>
<dbReference type="InterPro" id="IPR013820">
    <property type="entry name" value="ATP_PRibTrfase_cat"/>
</dbReference>
<dbReference type="InterPro" id="IPR018198">
    <property type="entry name" value="ATP_PRibTrfase_CS"/>
</dbReference>
<dbReference type="InterPro" id="IPR001348">
    <property type="entry name" value="ATP_PRibTrfase_HisG"/>
</dbReference>
<dbReference type="InterPro" id="IPR024893">
    <property type="entry name" value="ATP_PRibTrfase_HisG_short"/>
</dbReference>
<dbReference type="NCBIfam" id="TIGR00070">
    <property type="entry name" value="hisG"/>
    <property type="match status" value="1"/>
</dbReference>
<dbReference type="PANTHER" id="PTHR21403:SF8">
    <property type="entry name" value="ATP PHOSPHORIBOSYLTRANSFERASE"/>
    <property type="match status" value="1"/>
</dbReference>
<dbReference type="PANTHER" id="PTHR21403">
    <property type="entry name" value="ATP PHOSPHORIBOSYLTRANSFERASE ATP-PRTASE"/>
    <property type="match status" value="1"/>
</dbReference>
<dbReference type="Pfam" id="PF01634">
    <property type="entry name" value="HisG"/>
    <property type="match status" value="1"/>
</dbReference>
<dbReference type="SUPFAM" id="SSF53850">
    <property type="entry name" value="Periplasmic binding protein-like II"/>
    <property type="match status" value="1"/>
</dbReference>
<dbReference type="PROSITE" id="PS01316">
    <property type="entry name" value="ATP_P_PHORIBOSYLTR"/>
    <property type="match status" value="1"/>
</dbReference>